<proteinExistence type="inferred from homology"/>
<feature type="chain" id="PRO_0000172673" description="Phosphatidylglycerol--prolipoprotein diacylglyceryl transferase">
    <location>
        <begin position="1"/>
        <end position="279"/>
    </location>
</feature>
<feature type="transmembrane region" description="Helical" evidence="1">
    <location>
        <begin position="18"/>
        <end position="38"/>
    </location>
</feature>
<feature type="transmembrane region" description="Helical" evidence="1">
    <location>
        <begin position="55"/>
        <end position="75"/>
    </location>
</feature>
<feature type="transmembrane region" description="Helical" evidence="1">
    <location>
        <begin position="89"/>
        <end position="109"/>
    </location>
</feature>
<feature type="transmembrane region" description="Helical" evidence="1">
    <location>
        <begin position="203"/>
        <end position="223"/>
    </location>
</feature>
<feature type="transmembrane region" description="Helical" evidence="1">
    <location>
        <begin position="235"/>
        <end position="255"/>
    </location>
</feature>
<feature type="binding site" evidence="1">
    <location>
        <position position="137"/>
    </location>
    <ligand>
        <name>a 1,2-diacyl-sn-glycero-3-phospho-(1'-sn-glycerol)</name>
        <dbReference type="ChEBI" id="CHEBI:64716"/>
    </ligand>
</feature>
<dbReference type="EC" id="2.5.1.145" evidence="1"/>
<dbReference type="EMBL" id="BA000017">
    <property type="protein sequence ID" value="BAB56923.1"/>
    <property type="molecule type" value="Genomic_DNA"/>
</dbReference>
<dbReference type="RefSeq" id="WP_000513305.1">
    <property type="nucleotide sequence ID" value="NC_002758.2"/>
</dbReference>
<dbReference type="SMR" id="P60961"/>
<dbReference type="KEGG" id="sav:SAV0761"/>
<dbReference type="HOGENOM" id="CLU_013386_0_1_9"/>
<dbReference type="PhylomeDB" id="P60961"/>
<dbReference type="UniPathway" id="UPA00664"/>
<dbReference type="Proteomes" id="UP000002481">
    <property type="component" value="Chromosome"/>
</dbReference>
<dbReference type="GO" id="GO:0005886">
    <property type="term" value="C:plasma membrane"/>
    <property type="evidence" value="ECO:0007669"/>
    <property type="project" value="UniProtKB-SubCell"/>
</dbReference>
<dbReference type="GO" id="GO:0008961">
    <property type="term" value="F:phosphatidylglycerol-prolipoprotein diacylglyceryl transferase activity"/>
    <property type="evidence" value="ECO:0007669"/>
    <property type="project" value="UniProtKB-UniRule"/>
</dbReference>
<dbReference type="GO" id="GO:0042158">
    <property type="term" value="P:lipoprotein biosynthetic process"/>
    <property type="evidence" value="ECO:0007669"/>
    <property type="project" value="UniProtKB-UniRule"/>
</dbReference>
<dbReference type="HAMAP" id="MF_01147">
    <property type="entry name" value="Lgt"/>
    <property type="match status" value="1"/>
</dbReference>
<dbReference type="InterPro" id="IPR001640">
    <property type="entry name" value="Lgt"/>
</dbReference>
<dbReference type="NCBIfam" id="TIGR00544">
    <property type="entry name" value="lgt"/>
    <property type="match status" value="1"/>
</dbReference>
<dbReference type="PANTHER" id="PTHR30589:SF0">
    <property type="entry name" value="PHOSPHATIDYLGLYCEROL--PROLIPOPROTEIN DIACYLGLYCERYL TRANSFERASE"/>
    <property type="match status" value="1"/>
</dbReference>
<dbReference type="PANTHER" id="PTHR30589">
    <property type="entry name" value="PROLIPOPROTEIN DIACYLGLYCERYL TRANSFERASE"/>
    <property type="match status" value="1"/>
</dbReference>
<dbReference type="Pfam" id="PF01790">
    <property type="entry name" value="LGT"/>
    <property type="match status" value="1"/>
</dbReference>
<dbReference type="PROSITE" id="PS01311">
    <property type="entry name" value="LGT"/>
    <property type="match status" value="1"/>
</dbReference>
<sequence>MGIVFNYIDPVAFNLGPLSVRWYGIIIAVGILLGYFVAQRALVKAGLHKDTLVDIIFYSALFGFIAARIYFVIFQWPYYAENPSEIIKIWHGGIAIHGGLIGGFIAGVIVCKVKNLNPFQIGDIVAPSIILAQGIGRWGNFMNHEAHGGPVSRAFLEQLHLPNFIIENMYINGQYYHPTFLYESIWDVAGFIILVNIRKHLKLGETFFLYLTWYSIGRFFIEGLRTDSLMLTSNIRVAQLVSILLILISISLIVYRRIKYNPPLYSKVGALPWPTKKVK</sequence>
<accession>P60961</accession>
<accession>P52282</accession>
<keyword id="KW-1003">Cell membrane</keyword>
<keyword id="KW-0472">Membrane</keyword>
<keyword id="KW-0808">Transferase</keyword>
<keyword id="KW-0812">Transmembrane</keyword>
<keyword id="KW-1133">Transmembrane helix</keyword>
<organism>
    <name type="scientific">Staphylococcus aureus (strain Mu50 / ATCC 700699)</name>
    <dbReference type="NCBI Taxonomy" id="158878"/>
    <lineage>
        <taxon>Bacteria</taxon>
        <taxon>Bacillati</taxon>
        <taxon>Bacillota</taxon>
        <taxon>Bacilli</taxon>
        <taxon>Bacillales</taxon>
        <taxon>Staphylococcaceae</taxon>
        <taxon>Staphylococcus</taxon>
    </lineage>
</organism>
<evidence type="ECO:0000255" key="1">
    <source>
        <dbReference type="HAMAP-Rule" id="MF_01147"/>
    </source>
</evidence>
<evidence type="ECO:0000305" key="2"/>
<protein>
    <recommendedName>
        <fullName evidence="1">Phosphatidylglycerol--prolipoprotein diacylglyceryl transferase</fullName>
        <ecNumber evidence="1">2.5.1.145</ecNumber>
    </recommendedName>
</protein>
<comment type="function">
    <text evidence="1">Catalyzes the transfer of the diacylglyceryl group from phosphatidylglycerol to the sulfhydryl group of the N-terminal cysteine of a prolipoprotein, the first step in the formation of mature lipoproteins.</text>
</comment>
<comment type="catalytic activity">
    <reaction evidence="1">
        <text>L-cysteinyl-[prolipoprotein] + a 1,2-diacyl-sn-glycero-3-phospho-(1'-sn-glycerol) = an S-1,2-diacyl-sn-glyceryl-L-cysteinyl-[prolipoprotein] + sn-glycerol 1-phosphate + H(+)</text>
        <dbReference type="Rhea" id="RHEA:56712"/>
        <dbReference type="Rhea" id="RHEA-COMP:14679"/>
        <dbReference type="Rhea" id="RHEA-COMP:14680"/>
        <dbReference type="ChEBI" id="CHEBI:15378"/>
        <dbReference type="ChEBI" id="CHEBI:29950"/>
        <dbReference type="ChEBI" id="CHEBI:57685"/>
        <dbReference type="ChEBI" id="CHEBI:64716"/>
        <dbReference type="ChEBI" id="CHEBI:140658"/>
        <dbReference type="EC" id="2.5.1.145"/>
    </reaction>
</comment>
<comment type="pathway">
    <text evidence="1">Protein modification; lipoprotein biosynthesis (diacylglyceryl transfer).</text>
</comment>
<comment type="subcellular location">
    <subcellularLocation>
        <location evidence="1">Cell membrane</location>
        <topology evidence="1">Multi-pass membrane protein</topology>
    </subcellularLocation>
</comment>
<comment type="similarity">
    <text evidence="1 2">Belongs to the Lgt family.</text>
</comment>
<gene>
    <name evidence="1" type="primary">lgt</name>
    <name type="ordered locus">SAV0761</name>
</gene>
<reference key="1">
    <citation type="journal article" date="2001" name="Lancet">
        <title>Whole genome sequencing of meticillin-resistant Staphylococcus aureus.</title>
        <authorList>
            <person name="Kuroda M."/>
            <person name="Ohta T."/>
            <person name="Uchiyama I."/>
            <person name="Baba T."/>
            <person name="Yuzawa H."/>
            <person name="Kobayashi I."/>
            <person name="Cui L."/>
            <person name="Oguchi A."/>
            <person name="Aoki K."/>
            <person name="Nagai Y."/>
            <person name="Lian J.-Q."/>
            <person name="Ito T."/>
            <person name="Kanamori M."/>
            <person name="Matsumaru H."/>
            <person name="Maruyama A."/>
            <person name="Murakami H."/>
            <person name="Hosoyama A."/>
            <person name="Mizutani-Ui Y."/>
            <person name="Takahashi N.K."/>
            <person name="Sawano T."/>
            <person name="Inoue R."/>
            <person name="Kaito C."/>
            <person name="Sekimizu K."/>
            <person name="Hirakawa H."/>
            <person name="Kuhara S."/>
            <person name="Goto S."/>
            <person name="Yabuzaki J."/>
            <person name="Kanehisa M."/>
            <person name="Yamashita A."/>
            <person name="Oshima K."/>
            <person name="Furuya K."/>
            <person name="Yoshino C."/>
            <person name="Shiba T."/>
            <person name="Hattori M."/>
            <person name="Ogasawara N."/>
            <person name="Hayashi H."/>
            <person name="Hiramatsu K."/>
        </authorList>
    </citation>
    <scope>NUCLEOTIDE SEQUENCE [LARGE SCALE GENOMIC DNA]</scope>
    <source>
        <strain>Mu50 / ATCC 700699</strain>
    </source>
</reference>
<name>LGT_STAAM</name>